<sequence length="428" mass="48902">MAKTVAYFYDPDVGNFHYGAGHPMKPHRLALTHSLVLHYGLYKKMIVFKPYQASQHDMCRFHSEDYIDFLQRVSPNNMQGFTKSLNAFNVGDDCPVFPGLFEFCSRYTGASLQGATQLNNKICDIAINWAGGLHHAKKFEASGFCYVNDIVIGILELLKYHPRVLYIDIDIHHGDGVQEAFYLTDRVMTVSFHKYGNYFFPGTGDMYEVGAESGRYYALNVPLRDGIDDQSYKHLFQPVINQVVDYYQPTCIVLQCGADSLGRDRLGCFNLSIRGHGECVEYVKSFNIPLLVLGGGGYTVRNVARCWTYETSLLVDEAISEELPYSEYFEYFAPDFTLHPDVSTRIENQNSRQYLDQIRQTIFENLKMLNHAPSVQIHDVPSDLLSYDRTDEPDPEERGSEENYSRPEAANEFYDGDHDNDKESDVEI</sequence>
<name>HDAC3_CHICK</name>
<reference key="1">
    <citation type="journal article" date="2000" name="J. Biol. Chem.">
        <title>N-terminal region, C-terminal region, nuclear export signal, and deacetylation activity of histone deacetylase-3 are essential for the viability of the DT40 chicken B cell line.</title>
        <authorList>
            <person name="Takami Y."/>
            <person name="Nakayama T."/>
        </authorList>
    </citation>
    <scope>NUCLEOTIDE SEQUENCE [MRNA]</scope>
</reference>
<dbReference type="EC" id="3.5.1.98" evidence="1"/>
<dbReference type="EC" id="3.5.1.-" evidence="1"/>
<dbReference type="EMBL" id="AF039753">
    <property type="protein sequence ID" value="AAB96925.1"/>
    <property type="molecule type" value="mRNA"/>
</dbReference>
<dbReference type="RefSeq" id="NP_990078.1">
    <property type="nucleotide sequence ID" value="NM_204747.1"/>
</dbReference>
<dbReference type="SMR" id="P56520"/>
<dbReference type="BioGRID" id="675790">
    <property type="interactions" value="1"/>
</dbReference>
<dbReference type="FunCoup" id="P56520">
    <property type="interactions" value="878"/>
</dbReference>
<dbReference type="STRING" id="9031.ENSGALP00000004141"/>
<dbReference type="PaxDb" id="9031-ENSGALP00000004141"/>
<dbReference type="GeneID" id="395506"/>
<dbReference type="KEGG" id="gga:395506"/>
<dbReference type="CTD" id="8841"/>
<dbReference type="VEuPathDB" id="HostDB:geneid_395506"/>
<dbReference type="eggNOG" id="KOG1342">
    <property type="taxonomic scope" value="Eukaryota"/>
</dbReference>
<dbReference type="InParanoid" id="P56520"/>
<dbReference type="OrthoDB" id="1918432at2759"/>
<dbReference type="PhylomeDB" id="P56520"/>
<dbReference type="PRO" id="PR:P56520"/>
<dbReference type="Proteomes" id="UP000000539">
    <property type="component" value="Unassembled WGS sequence"/>
</dbReference>
<dbReference type="GO" id="GO:0005694">
    <property type="term" value="C:chromosome"/>
    <property type="evidence" value="ECO:0007669"/>
    <property type="project" value="UniProtKB-SubCell"/>
</dbReference>
<dbReference type="GO" id="GO:0005737">
    <property type="term" value="C:cytoplasm"/>
    <property type="evidence" value="ECO:0000250"/>
    <property type="project" value="UniProtKB"/>
</dbReference>
<dbReference type="GO" id="GO:0005829">
    <property type="term" value="C:cytosol"/>
    <property type="evidence" value="ECO:0007669"/>
    <property type="project" value="UniProtKB-SubCell"/>
</dbReference>
<dbReference type="GO" id="GO:0000118">
    <property type="term" value="C:histone deacetylase complex"/>
    <property type="evidence" value="ECO:0000304"/>
    <property type="project" value="UniProtKB"/>
</dbReference>
<dbReference type="GO" id="GO:0005634">
    <property type="term" value="C:nucleus"/>
    <property type="evidence" value="ECO:0000250"/>
    <property type="project" value="UniProtKB"/>
</dbReference>
<dbReference type="GO" id="GO:0017053">
    <property type="term" value="C:transcription repressor complex"/>
    <property type="evidence" value="ECO:0000250"/>
    <property type="project" value="UniProtKB"/>
</dbReference>
<dbReference type="GO" id="GO:0003682">
    <property type="term" value="F:chromatin binding"/>
    <property type="evidence" value="ECO:0000250"/>
    <property type="project" value="UniProtKB"/>
</dbReference>
<dbReference type="GO" id="GO:0140297">
    <property type="term" value="F:DNA-binding transcription factor binding"/>
    <property type="evidence" value="ECO:0000353"/>
    <property type="project" value="AgBase"/>
</dbReference>
<dbReference type="GO" id="GO:0004407">
    <property type="term" value="F:histone deacetylase activity"/>
    <property type="evidence" value="ECO:0000318"/>
    <property type="project" value="GO_Central"/>
</dbReference>
<dbReference type="GO" id="GO:0141221">
    <property type="term" value="F:histone deacetylase activity, hydrolytic mechanism"/>
    <property type="evidence" value="ECO:0007669"/>
    <property type="project" value="UniProtKB-EC"/>
</dbReference>
<dbReference type="GO" id="GO:0160009">
    <property type="term" value="F:histone decrotonylase activity"/>
    <property type="evidence" value="ECO:0000250"/>
    <property type="project" value="UniProtKB"/>
</dbReference>
<dbReference type="GO" id="GO:0046872">
    <property type="term" value="F:metal ion binding"/>
    <property type="evidence" value="ECO:0007669"/>
    <property type="project" value="UniProtKB-KW"/>
</dbReference>
<dbReference type="GO" id="GO:0160010">
    <property type="term" value="F:protein de-2-hydroxyisobutyrylase activity"/>
    <property type="evidence" value="ECO:0000250"/>
    <property type="project" value="UniProtKB"/>
</dbReference>
<dbReference type="GO" id="GO:0160008">
    <property type="term" value="F:protein decrotonylase activity"/>
    <property type="evidence" value="ECO:0000250"/>
    <property type="project" value="UniProtKB"/>
</dbReference>
<dbReference type="GO" id="GO:0033558">
    <property type="term" value="F:protein lysine deacetylase activity"/>
    <property type="evidence" value="ECO:0000250"/>
    <property type="project" value="UniProtKB"/>
</dbReference>
<dbReference type="GO" id="GO:0160216">
    <property type="term" value="F:protein lysine delactylase activity"/>
    <property type="evidence" value="ECO:0000250"/>
    <property type="project" value="UniProtKB"/>
</dbReference>
<dbReference type="GO" id="GO:0003714">
    <property type="term" value="F:transcription corepressor activity"/>
    <property type="evidence" value="ECO:0000315"/>
    <property type="project" value="AgBase"/>
</dbReference>
<dbReference type="GO" id="GO:0006325">
    <property type="term" value="P:chromatin organization"/>
    <property type="evidence" value="ECO:0000304"/>
    <property type="project" value="UniProtKB"/>
</dbReference>
<dbReference type="GO" id="GO:0032922">
    <property type="term" value="P:circadian regulation of gene expression"/>
    <property type="evidence" value="ECO:0000250"/>
    <property type="project" value="UniProtKB"/>
</dbReference>
<dbReference type="GO" id="GO:0040029">
    <property type="term" value="P:epigenetic regulation of gene expression"/>
    <property type="evidence" value="ECO:0000318"/>
    <property type="project" value="GO_Central"/>
</dbReference>
<dbReference type="GO" id="GO:0000122">
    <property type="term" value="P:negative regulation of transcription by RNA polymerase II"/>
    <property type="evidence" value="ECO:0000250"/>
    <property type="project" value="UniProtKB"/>
</dbReference>
<dbReference type="GO" id="GO:0042752">
    <property type="term" value="P:regulation of circadian rhythm"/>
    <property type="evidence" value="ECO:0000250"/>
    <property type="project" value="UniProtKB"/>
</dbReference>
<dbReference type="CDD" id="cd10005">
    <property type="entry name" value="HDAC3"/>
    <property type="match status" value="1"/>
</dbReference>
<dbReference type="FunFam" id="3.40.800.20:FF:000004">
    <property type="entry name" value="Histone deacetylase"/>
    <property type="match status" value="1"/>
</dbReference>
<dbReference type="Gene3D" id="3.40.800.20">
    <property type="entry name" value="Histone deacetylase domain"/>
    <property type="match status" value="1"/>
</dbReference>
<dbReference type="InterPro" id="IPR050284">
    <property type="entry name" value="HDAC_PDAC"/>
</dbReference>
<dbReference type="InterPro" id="IPR000286">
    <property type="entry name" value="His_deacetylse"/>
</dbReference>
<dbReference type="InterPro" id="IPR003084">
    <property type="entry name" value="His_deacetylse_1"/>
</dbReference>
<dbReference type="InterPro" id="IPR023801">
    <property type="entry name" value="His_deacetylse_dom"/>
</dbReference>
<dbReference type="InterPro" id="IPR037138">
    <property type="entry name" value="His_deacetylse_dom_sf"/>
</dbReference>
<dbReference type="InterPro" id="IPR023696">
    <property type="entry name" value="Ureohydrolase_dom_sf"/>
</dbReference>
<dbReference type="PANTHER" id="PTHR10625:SF36">
    <property type="entry name" value="HISTONE DEACETYLASE 3"/>
    <property type="match status" value="1"/>
</dbReference>
<dbReference type="PANTHER" id="PTHR10625">
    <property type="entry name" value="HISTONE DEACETYLASE HDAC1-RELATED"/>
    <property type="match status" value="1"/>
</dbReference>
<dbReference type="Pfam" id="PF00850">
    <property type="entry name" value="Hist_deacetyl"/>
    <property type="match status" value="1"/>
</dbReference>
<dbReference type="PIRSF" id="PIRSF037913">
    <property type="entry name" value="His_deacetylse_1"/>
    <property type="match status" value="1"/>
</dbReference>
<dbReference type="PRINTS" id="PR01270">
    <property type="entry name" value="HDASUPER"/>
</dbReference>
<dbReference type="PRINTS" id="PR01271">
    <property type="entry name" value="HISDACETLASE"/>
</dbReference>
<dbReference type="SUPFAM" id="SSF52768">
    <property type="entry name" value="Arginase/deacetylase"/>
    <property type="match status" value="1"/>
</dbReference>
<feature type="chain" id="PRO_0000114698" description="Histone deacetylase 3">
    <location>
        <begin position="1"/>
        <end position="428"/>
    </location>
</feature>
<feature type="region of interest" description="Histone deacetylase">
    <location>
        <begin position="3"/>
        <end position="316"/>
    </location>
</feature>
<feature type="region of interest" description="Disordered" evidence="3">
    <location>
        <begin position="385"/>
        <end position="428"/>
    </location>
</feature>
<feature type="compositionally biased region" description="Basic and acidic residues" evidence="3">
    <location>
        <begin position="386"/>
        <end position="405"/>
    </location>
</feature>
<feature type="compositionally biased region" description="Basic and acidic residues" evidence="3">
    <location>
        <begin position="415"/>
        <end position="428"/>
    </location>
</feature>
<feature type="active site" evidence="2">
    <location>
        <position position="135"/>
    </location>
</feature>
<feature type="binding site" evidence="1">
    <location>
        <position position="17"/>
    </location>
    <ligand>
        <name>1D-myo-inositol 1,4,5,6-tetrakisphosphate</name>
        <dbReference type="ChEBI" id="CHEBI:57627"/>
    </ligand>
</feature>
<feature type="binding site" evidence="1">
    <location>
        <position position="21"/>
    </location>
    <ligand>
        <name>1D-myo-inositol 1,4,5,6-tetrakisphosphate</name>
        <dbReference type="ChEBI" id="CHEBI:57627"/>
    </ligand>
</feature>
<feature type="binding site" evidence="1">
    <location>
        <position position="25"/>
    </location>
    <ligand>
        <name>1D-myo-inositol 1,4,5,6-tetrakisphosphate</name>
        <dbReference type="ChEBI" id="CHEBI:57627"/>
    </ligand>
</feature>
<feature type="binding site" evidence="1">
    <location>
        <position position="170"/>
    </location>
    <ligand>
        <name>Zn(2+)</name>
        <dbReference type="ChEBI" id="CHEBI:29105"/>
    </ligand>
</feature>
<feature type="binding site" evidence="1">
    <location>
        <position position="172"/>
    </location>
    <ligand>
        <name>Zn(2+)</name>
        <dbReference type="ChEBI" id="CHEBI:29105"/>
    </ligand>
</feature>
<feature type="binding site" evidence="1">
    <location>
        <position position="259"/>
    </location>
    <ligand>
        <name>Zn(2+)</name>
        <dbReference type="ChEBI" id="CHEBI:29105"/>
    </ligand>
</feature>
<feature type="binding site" evidence="1">
    <location>
        <position position="265"/>
    </location>
    <ligand>
        <name>1D-myo-inositol 1,4,5,6-tetrakisphosphate</name>
        <dbReference type="ChEBI" id="CHEBI:57627"/>
    </ligand>
</feature>
<keyword id="KW-0090">Biological rhythms</keyword>
<keyword id="KW-0156">Chromatin regulator</keyword>
<keyword id="KW-0158">Chromosome</keyword>
<keyword id="KW-0963">Cytoplasm</keyword>
<keyword id="KW-0378">Hydrolase</keyword>
<keyword id="KW-0479">Metal-binding</keyword>
<keyword id="KW-0539">Nucleus</keyword>
<keyword id="KW-1185">Reference proteome</keyword>
<keyword id="KW-0678">Repressor</keyword>
<keyword id="KW-0804">Transcription</keyword>
<keyword id="KW-0805">Transcription regulation</keyword>
<keyword id="KW-0862">Zinc</keyword>
<comment type="function">
    <text evidence="1">Histone deacetylase that catalyzes the deacetylation of lysine residues on the N-terminal part of the core histones (H2A, H2B, H3 and H4), and some other non-histone substrates. Histone deacetylation gives a tag for epigenetic repression and plays an important role in transcriptional regulation, cell cycle progression and developmental events. Histone deacetylases act via the formation of large multiprotein complexes, such as N-Cor repressor complex, which activate the histone deacetylase activity. Participates in the BCL6 transcriptional repressor activity by deacetylating the H3 'Lys-27' (H3K27) on enhancer elements, antagonizing EP300 acetyltransferase activity and repressing proximal gene expression. Also functions as a deacetylase for non-histone targets. In addition to protein deacetylase activity, also acts as a protein-lysine deacylase by recognizing other acyl groups: catalyzes removal of (2E)-butenoyl (crotonyl), lactoyl (lactyl) and 2-hydroxyisobutanoyl (2-hydroxyisobutyryl) acyl groups from lysine residues, leading to protein decrotonylation, delactylation and de-2-hydroxyisobutyrylation, respectively.</text>
</comment>
<comment type="catalytic activity">
    <reaction evidence="1">
        <text>N(6)-acetyl-L-lysyl-[histone] + H2O = L-lysyl-[histone] + acetate</text>
        <dbReference type="Rhea" id="RHEA:58196"/>
        <dbReference type="Rhea" id="RHEA-COMP:9845"/>
        <dbReference type="Rhea" id="RHEA-COMP:11338"/>
        <dbReference type="ChEBI" id="CHEBI:15377"/>
        <dbReference type="ChEBI" id="CHEBI:29969"/>
        <dbReference type="ChEBI" id="CHEBI:30089"/>
        <dbReference type="ChEBI" id="CHEBI:61930"/>
        <dbReference type="EC" id="3.5.1.98"/>
    </reaction>
    <physiologicalReaction direction="left-to-right" evidence="1">
        <dbReference type="Rhea" id="RHEA:58197"/>
    </physiologicalReaction>
</comment>
<comment type="catalytic activity">
    <reaction evidence="1">
        <text>N(6)-acetyl-L-lysyl-[protein] + H2O = L-lysyl-[protein] + acetate</text>
        <dbReference type="Rhea" id="RHEA:58108"/>
        <dbReference type="Rhea" id="RHEA-COMP:9752"/>
        <dbReference type="Rhea" id="RHEA-COMP:10731"/>
        <dbReference type="ChEBI" id="CHEBI:15377"/>
        <dbReference type="ChEBI" id="CHEBI:29969"/>
        <dbReference type="ChEBI" id="CHEBI:30089"/>
        <dbReference type="ChEBI" id="CHEBI:61930"/>
    </reaction>
    <physiologicalReaction direction="left-to-right" evidence="1">
        <dbReference type="Rhea" id="RHEA:58109"/>
    </physiologicalReaction>
</comment>
<comment type="catalytic activity">
    <reaction evidence="1">
        <text>N(6)-(2E)-butenoyl-L-lysyl-[protein] + H2O = (2E)-2-butenoate + L-lysyl-[protein]</text>
        <dbReference type="Rhea" id="RHEA:69172"/>
        <dbReference type="Rhea" id="RHEA-COMP:9752"/>
        <dbReference type="Rhea" id="RHEA-COMP:13707"/>
        <dbReference type="ChEBI" id="CHEBI:15377"/>
        <dbReference type="ChEBI" id="CHEBI:29969"/>
        <dbReference type="ChEBI" id="CHEBI:35899"/>
        <dbReference type="ChEBI" id="CHEBI:137954"/>
    </reaction>
    <physiologicalReaction direction="left-to-right" evidence="1">
        <dbReference type="Rhea" id="RHEA:69173"/>
    </physiologicalReaction>
</comment>
<comment type="catalytic activity">
    <reaction evidence="1">
        <text>N(6)-(2-hydroxyisobutanoyl)-L-lysyl-[protein] + H2O = 2-hydroxy-2-methylpropanoate + L-lysyl-[protein]</text>
        <dbReference type="Rhea" id="RHEA:69176"/>
        <dbReference type="Rhea" id="RHEA-COMP:9752"/>
        <dbReference type="Rhea" id="RHEA-COMP:15921"/>
        <dbReference type="ChEBI" id="CHEBI:15377"/>
        <dbReference type="ChEBI" id="CHEBI:19641"/>
        <dbReference type="ChEBI" id="CHEBI:29969"/>
        <dbReference type="ChEBI" id="CHEBI:144968"/>
    </reaction>
    <physiologicalReaction direction="left-to-right" evidence="1">
        <dbReference type="Rhea" id="RHEA:69177"/>
    </physiologicalReaction>
</comment>
<comment type="catalytic activity">
    <reaction evidence="1">
        <text>N(6)-[(S)-lactoyl]-L-lysyl-[protein] + H2O = (S)-lactate + L-lysyl-[protein]</text>
        <dbReference type="Rhea" id="RHEA:81387"/>
        <dbReference type="Rhea" id="RHEA-COMP:9752"/>
        <dbReference type="Rhea" id="RHEA-COMP:19466"/>
        <dbReference type="ChEBI" id="CHEBI:15377"/>
        <dbReference type="ChEBI" id="CHEBI:16651"/>
        <dbReference type="ChEBI" id="CHEBI:29969"/>
        <dbReference type="ChEBI" id="CHEBI:231527"/>
    </reaction>
    <physiologicalReaction direction="left-to-right" evidence="1">
        <dbReference type="Rhea" id="RHEA:81388"/>
    </physiologicalReaction>
</comment>
<comment type="activity regulation">
    <text evidence="1">Inositol tetraphosphate (1D-myo-inositol 1,4,5,6-tetrakisphosphate) promotes the histone deacetylase activity by acting as an intermolecular glue between HDAC3 and N-Cor repressor complex components.</text>
</comment>
<comment type="subcellular location">
    <subcellularLocation>
        <location evidence="1">Nucleus</location>
    </subcellularLocation>
    <subcellularLocation>
        <location evidence="1">Chromosome</location>
    </subcellularLocation>
    <subcellularLocation>
        <location evidence="1">Cytoplasm</location>
        <location evidence="1">Cytosol</location>
    </subcellularLocation>
</comment>
<comment type="similarity">
    <text evidence="4">Belongs to the histone deacetylase family. HD type 1 subfamily.</text>
</comment>
<gene>
    <name type="primary">HDAC3</name>
</gene>
<protein>
    <recommendedName>
        <fullName>Histone deacetylase 3</fullName>
        <shortName>HD3</shortName>
        <ecNumber evidence="1">3.5.1.98</ecNumber>
    </recommendedName>
    <alternativeName>
        <fullName>Protein deacetylase HDAC3</fullName>
        <ecNumber evidence="1">3.5.1.-</ecNumber>
    </alternativeName>
    <alternativeName>
        <fullName>Protein deacylase HDAC3</fullName>
        <ecNumber evidence="1">3.5.1.-</ecNumber>
    </alternativeName>
</protein>
<proteinExistence type="evidence at transcript level"/>
<accession>P56520</accession>
<evidence type="ECO:0000250" key="1">
    <source>
        <dbReference type="UniProtKB" id="O15379"/>
    </source>
</evidence>
<evidence type="ECO:0000250" key="2">
    <source>
        <dbReference type="UniProtKB" id="Q13547"/>
    </source>
</evidence>
<evidence type="ECO:0000256" key="3">
    <source>
        <dbReference type="SAM" id="MobiDB-lite"/>
    </source>
</evidence>
<evidence type="ECO:0000305" key="4"/>
<organism>
    <name type="scientific">Gallus gallus</name>
    <name type="common">Chicken</name>
    <dbReference type="NCBI Taxonomy" id="9031"/>
    <lineage>
        <taxon>Eukaryota</taxon>
        <taxon>Metazoa</taxon>
        <taxon>Chordata</taxon>
        <taxon>Craniata</taxon>
        <taxon>Vertebrata</taxon>
        <taxon>Euteleostomi</taxon>
        <taxon>Archelosauria</taxon>
        <taxon>Archosauria</taxon>
        <taxon>Dinosauria</taxon>
        <taxon>Saurischia</taxon>
        <taxon>Theropoda</taxon>
        <taxon>Coelurosauria</taxon>
        <taxon>Aves</taxon>
        <taxon>Neognathae</taxon>
        <taxon>Galloanserae</taxon>
        <taxon>Galliformes</taxon>
        <taxon>Phasianidae</taxon>
        <taxon>Phasianinae</taxon>
        <taxon>Gallus</taxon>
    </lineage>
</organism>